<protein>
    <recommendedName>
        <fullName evidence="1">Nucleoside diphosphate kinase</fullName>
        <shortName evidence="1">NDK</shortName>
        <shortName evidence="1">NDP kinase</shortName>
        <ecNumber evidence="1">2.7.4.6</ecNumber>
    </recommendedName>
    <alternativeName>
        <fullName evidence="1">Nucleoside-2-P kinase</fullName>
    </alternativeName>
</protein>
<name>NDK_SHEDO</name>
<gene>
    <name evidence="1" type="primary">ndk</name>
    <name type="ordered locus">Sden_2390</name>
</gene>
<dbReference type="EC" id="2.7.4.6" evidence="1"/>
<dbReference type="EMBL" id="CP000302">
    <property type="protein sequence ID" value="ABE55670.1"/>
    <property type="molecule type" value="Genomic_DNA"/>
</dbReference>
<dbReference type="RefSeq" id="WP_011496821.1">
    <property type="nucleotide sequence ID" value="NC_007954.1"/>
</dbReference>
<dbReference type="SMR" id="Q12LK6"/>
<dbReference type="STRING" id="318161.Sden_2390"/>
<dbReference type="KEGG" id="sdn:Sden_2390"/>
<dbReference type="eggNOG" id="COG0105">
    <property type="taxonomic scope" value="Bacteria"/>
</dbReference>
<dbReference type="HOGENOM" id="CLU_060216_8_1_6"/>
<dbReference type="OrthoDB" id="9801161at2"/>
<dbReference type="Proteomes" id="UP000001982">
    <property type="component" value="Chromosome"/>
</dbReference>
<dbReference type="GO" id="GO:0005737">
    <property type="term" value="C:cytoplasm"/>
    <property type="evidence" value="ECO:0007669"/>
    <property type="project" value="UniProtKB-SubCell"/>
</dbReference>
<dbReference type="GO" id="GO:0005524">
    <property type="term" value="F:ATP binding"/>
    <property type="evidence" value="ECO:0007669"/>
    <property type="project" value="UniProtKB-UniRule"/>
</dbReference>
<dbReference type="GO" id="GO:0046872">
    <property type="term" value="F:metal ion binding"/>
    <property type="evidence" value="ECO:0007669"/>
    <property type="project" value="UniProtKB-KW"/>
</dbReference>
<dbReference type="GO" id="GO:0004550">
    <property type="term" value="F:nucleoside diphosphate kinase activity"/>
    <property type="evidence" value="ECO:0007669"/>
    <property type="project" value="UniProtKB-UniRule"/>
</dbReference>
<dbReference type="GO" id="GO:0006241">
    <property type="term" value="P:CTP biosynthetic process"/>
    <property type="evidence" value="ECO:0007669"/>
    <property type="project" value="UniProtKB-UniRule"/>
</dbReference>
<dbReference type="GO" id="GO:0006183">
    <property type="term" value="P:GTP biosynthetic process"/>
    <property type="evidence" value="ECO:0007669"/>
    <property type="project" value="UniProtKB-UniRule"/>
</dbReference>
<dbReference type="GO" id="GO:0006228">
    <property type="term" value="P:UTP biosynthetic process"/>
    <property type="evidence" value="ECO:0007669"/>
    <property type="project" value="UniProtKB-UniRule"/>
</dbReference>
<dbReference type="CDD" id="cd04413">
    <property type="entry name" value="NDPk_I"/>
    <property type="match status" value="1"/>
</dbReference>
<dbReference type="FunFam" id="3.30.70.141:FF:000001">
    <property type="entry name" value="Nucleoside diphosphate kinase"/>
    <property type="match status" value="1"/>
</dbReference>
<dbReference type="Gene3D" id="3.30.70.141">
    <property type="entry name" value="Nucleoside diphosphate kinase-like domain"/>
    <property type="match status" value="1"/>
</dbReference>
<dbReference type="HAMAP" id="MF_00451">
    <property type="entry name" value="NDP_kinase"/>
    <property type="match status" value="1"/>
</dbReference>
<dbReference type="InterPro" id="IPR034907">
    <property type="entry name" value="NDK-like_dom"/>
</dbReference>
<dbReference type="InterPro" id="IPR036850">
    <property type="entry name" value="NDK-like_dom_sf"/>
</dbReference>
<dbReference type="InterPro" id="IPR001564">
    <property type="entry name" value="Nucleoside_diP_kinase"/>
</dbReference>
<dbReference type="InterPro" id="IPR023005">
    <property type="entry name" value="Nucleoside_diP_kinase_AS"/>
</dbReference>
<dbReference type="NCBIfam" id="NF001908">
    <property type="entry name" value="PRK00668.1"/>
    <property type="match status" value="1"/>
</dbReference>
<dbReference type="PANTHER" id="PTHR46161">
    <property type="entry name" value="NUCLEOSIDE DIPHOSPHATE KINASE"/>
    <property type="match status" value="1"/>
</dbReference>
<dbReference type="PANTHER" id="PTHR46161:SF3">
    <property type="entry name" value="NUCLEOSIDE DIPHOSPHATE KINASE DDB_G0292928-RELATED"/>
    <property type="match status" value="1"/>
</dbReference>
<dbReference type="Pfam" id="PF00334">
    <property type="entry name" value="NDK"/>
    <property type="match status" value="1"/>
</dbReference>
<dbReference type="PRINTS" id="PR01243">
    <property type="entry name" value="NUCDPKINASE"/>
</dbReference>
<dbReference type="SMART" id="SM00562">
    <property type="entry name" value="NDK"/>
    <property type="match status" value="1"/>
</dbReference>
<dbReference type="SUPFAM" id="SSF54919">
    <property type="entry name" value="Nucleoside diphosphate kinase, NDK"/>
    <property type="match status" value="1"/>
</dbReference>
<dbReference type="PROSITE" id="PS00469">
    <property type="entry name" value="NDPK"/>
    <property type="match status" value="1"/>
</dbReference>
<dbReference type="PROSITE" id="PS51374">
    <property type="entry name" value="NDPK_LIKE"/>
    <property type="match status" value="1"/>
</dbReference>
<feature type="chain" id="PRO_0000267800" description="Nucleoside diphosphate kinase">
    <location>
        <begin position="1"/>
        <end position="143"/>
    </location>
</feature>
<feature type="active site" description="Pros-phosphohistidine intermediate" evidence="1">
    <location>
        <position position="117"/>
    </location>
</feature>
<feature type="binding site" evidence="1">
    <location>
        <position position="11"/>
    </location>
    <ligand>
        <name>ATP</name>
        <dbReference type="ChEBI" id="CHEBI:30616"/>
    </ligand>
</feature>
<feature type="binding site" evidence="1">
    <location>
        <position position="59"/>
    </location>
    <ligand>
        <name>ATP</name>
        <dbReference type="ChEBI" id="CHEBI:30616"/>
    </ligand>
</feature>
<feature type="binding site" evidence="1">
    <location>
        <position position="87"/>
    </location>
    <ligand>
        <name>ATP</name>
        <dbReference type="ChEBI" id="CHEBI:30616"/>
    </ligand>
</feature>
<feature type="binding site" evidence="1">
    <location>
        <position position="93"/>
    </location>
    <ligand>
        <name>ATP</name>
        <dbReference type="ChEBI" id="CHEBI:30616"/>
    </ligand>
</feature>
<feature type="binding site" evidence="1">
    <location>
        <position position="104"/>
    </location>
    <ligand>
        <name>ATP</name>
        <dbReference type="ChEBI" id="CHEBI:30616"/>
    </ligand>
</feature>
<feature type="binding site" evidence="1">
    <location>
        <position position="114"/>
    </location>
    <ligand>
        <name>ATP</name>
        <dbReference type="ChEBI" id="CHEBI:30616"/>
    </ligand>
</feature>
<keyword id="KW-0067">ATP-binding</keyword>
<keyword id="KW-0963">Cytoplasm</keyword>
<keyword id="KW-0418">Kinase</keyword>
<keyword id="KW-0460">Magnesium</keyword>
<keyword id="KW-0479">Metal-binding</keyword>
<keyword id="KW-0546">Nucleotide metabolism</keyword>
<keyword id="KW-0547">Nucleotide-binding</keyword>
<keyword id="KW-0597">Phosphoprotein</keyword>
<keyword id="KW-1185">Reference proteome</keyword>
<keyword id="KW-0808">Transferase</keyword>
<organism>
    <name type="scientific">Shewanella denitrificans (strain OS217 / ATCC BAA-1090 / DSM 15013)</name>
    <dbReference type="NCBI Taxonomy" id="318161"/>
    <lineage>
        <taxon>Bacteria</taxon>
        <taxon>Pseudomonadati</taxon>
        <taxon>Pseudomonadota</taxon>
        <taxon>Gammaproteobacteria</taxon>
        <taxon>Alteromonadales</taxon>
        <taxon>Shewanellaceae</taxon>
        <taxon>Shewanella</taxon>
    </lineage>
</organism>
<reference key="1">
    <citation type="submission" date="2006-03" db="EMBL/GenBank/DDBJ databases">
        <title>Complete sequence of Shewanella denitrificans OS217.</title>
        <authorList>
            <consortium name="US DOE Joint Genome Institute"/>
            <person name="Copeland A."/>
            <person name="Lucas S."/>
            <person name="Lapidus A."/>
            <person name="Barry K."/>
            <person name="Detter J.C."/>
            <person name="Glavina del Rio T."/>
            <person name="Hammon N."/>
            <person name="Israni S."/>
            <person name="Dalin E."/>
            <person name="Tice H."/>
            <person name="Pitluck S."/>
            <person name="Brettin T."/>
            <person name="Bruce D."/>
            <person name="Han C."/>
            <person name="Tapia R."/>
            <person name="Gilna P."/>
            <person name="Kiss H."/>
            <person name="Schmutz J."/>
            <person name="Larimer F."/>
            <person name="Land M."/>
            <person name="Hauser L."/>
            <person name="Kyrpides N."/>
            <person name="Lykidis A."/>
            <person name="Richardson P."/>
        </authorList>
    </citation>
    <scope>NUCLEOTIDE SEQUENCE [LARGE SCALE GENOMIC DNA]</scope>
    <source>
        <strain>OS217 / ATCC BAA-1090 / DSM 15013</strain>
    </source>
</reference>
<evidence type="ECO:0000255" key="1">
    <source>
        <dbReference type="HAMAP-Rule" id="MF_00451"/>
    </source>
</evidence>
<sequence length="143" mass="15452">MAIERTFSIIKPDAVAKNHIGAIYNRFESAGLKIIASKMVHLTKEQAEGFYAEHSARPFFGALVSFMTSGPVMVQVLEGENAVLANREIMGATNPAEAARGTLRGDYAASIDENAVHGSDALESAAREIAYFFSADEVCPRTR</sequence>
<comment type="function">
    <text evidence="1">Major role in the synthesis of nucleoside triphosphates other than ATP. The ATP gamma phosphate is transferred to the NDP beta phosphate via a ping-pong mechanism, using a phosphorylated active-site intermediate.</text>
</comment>
<comment type="catalytic activity">
    <reaction evidence="1">
        <text>a 2'-deoxyribonucleoside 5'-diphosphate + ATP = a 2'-deoxyribonucleoside 5'-triphosphate + ADP</text>
        <dbReference type="Rhea" id="RHEA:44640"/>
        <dbReference type="ChEBI" id="CHEBI:30616"/>
        <dbReference type="ChEBI" id="CHEBI:61560"/>
        <dbReference type="ChEBI" id="CHEBI:73316"/>
        <dbReference type="ChEBI" id="CHEBI:456216"/>
        <dbReference type="EC" id="2.7.4.6"/>
    </reaction>
</comment>
<comment type="catalytic activity">
    <reaction evidence="1">
        <text>a ribonucleoside 5'-diphosphate + ATP = a ribonucleoside 5'-triphosphate + ADP</text>
        <dbReference type="Rhea" id="RHEA:18113"/>
        <dbReference type="ChEBI" id="CHEBI:30616"/>
        <dbReference type="ChEBI" id="CHEBI:57930"/>
        <dbReference type="ChEBI" id="CHEBI:61557"/>
        <dbReference type="ChEBI" id="CHEBI:456216"/>
        <dbReference type="EC" id="2.7.4.6"/>
    </reaction>
</comment>
<comment type="cofactor">
    <cofactor evidence="1">
        <name>Mg(2+)</name>
        <dbReference type="ChEBI" id="CHEBI:18420"/>
    </cofactor>
</comment>
<comment type="subunit">
    <text evidence="1">Homotetramer.</text>
</comment>
<comment type="subcellular location">
    <subcellularLocation>
        <location evidence="1">Cytoplasm</location>
    </subcellularLocation>
</comment>
<comment type="similarity">
    <text evidence="1">Belongs to the NDK family.</text>
</comment>
<proteinExistence type="inferred from homology"/>
<accession>Q12LK6</accession>